<protein>
    <recommendedName>
        <fullName evidence="1">Small ribosomal subunit protein uS11</fullName>
    </recommendedName>
    <alternativeName>
        <fullName evidence="2">30S ribosomal protein S11</fullName>
    </alternativeName>
</protein>
<reference key="1">
    <citation type="submission" date="2007-11" db="EMBL/GenBank/DDBJ databases">
        <title>Complete sequence of Delftia acidovorans DSM 14801 / SPH-1.</title>
        <authorList>
            <person name="Copeland A."/>
            <person name="Lucas S."/>
            <person name="Lapidus A."/>
            <person name="Barry K."/>
            <person name="Glavina del Rio T."/>
            <person name="Dalin E."/>
            <person name="Tice H."/>
            <person name="Pitluck S."/>
            <person name="Lowry S."/>
            <person name="Clum A."/>
            <person name="Schmutz J."/>
            <person name="Larimer F."/>
            <person name="Land M."/>
            <person name="Hauser L."/>
            <person name="Kyrpides N."/>
            <person name="Kim E."/>
            <person name="Schleheck D."/>
            <person name="Richardson P."/>
        </authorList>
    </citation>
    <scope>NUCLEOTIDE SEQUENCE [LARGE SCALE GENOMIC DNA]</scope>
    <source>
        <strain>DSM 14801 / SPH-1</strain>
    </source>
</reference>
<name>RS11_DELAS</name>
<keyword id="KW-1185">Reference proteome</keyword>
<keyword id="KW-0687">Ribonucleoprotein</keyword>
<keyword id="KW-0689">Ribosomal protein</keyword>
<keyword id="KW-0694">RNA-binding</keyword>
<keyword id="KW-0699">rRNA-binding</keyword>
<proteinExistence type="inferred from homology"/>
<gene>
    <name evidence="1" type="primary">rpsK</name>
    <name type="ordered locus">Daci_1045</name>
</gene>
<accession>A9BRX3</accession>
<evidence type="ECO:0000255" key="1">
    <source>
        <dbReference type="HAMAP-Rule" id="MF_01310"/>
    </source>
</evidence>
<evidence type="ECO:0000305" key="2"/>
<organism>
    <name type="scientific">Delftia acidovorans (strain DSM 14801 / SPH-1)</name>
    <dbReference type="NCBI Taxonomy" id="398578"/>
    <lineage>
        <taxon>Bacteria</taxon>
        <taxon>Pseudomonadati</taxon>
        <taxon>Pseudomonadota</taxon>
        <taxon>Betaproteobacteria</taxon>
        <taxon>Burkholderiales</taxon>
        <taxon>Comamonadaceae</taxon>
        <taxon>Delftia</taxon>
    </lineage>
</organism>
<feature type="chain" id="PRO_1000141081" description="Small ribosomal subunit protein uS11">
    <location>
        <begin position="1"/>
        <end position="134"/>
    </location>
</feature>
<comment type="function">
    <text evidence="1">Located on the platform of the 30S subunit, it bridges several disparate RNA helices of the 16S rRNA. Forms part of the Shine-Dalgarno cleft in the 70S ribosome.</text>
</comment>
<comment type="subunit">
    <text evidence="1">Part of the 30S ribosomal subunit. Interacts with proteins S7 and S18. Binds to IF-3.</text>
</comment>
<comment type="similarity">
    <text evidence="1">Belongs to the universal ribosomal protein uS11 family.</text>
</comment>
<dbReference type="EMBL" id="CP000884">
    <property type="protein sequence ID" value="ABX33690.1"/>
    <property type="molecule type" value="Genomic_DNA"/>
</dbReference>
<dbReference type="RefSeq" id="WP_012202976.1">
    <property type="nucleotide sequence ID" value="NC_010002.1"/>
</dbReference>
<dbReference type="SMR" id="A9BRX3"/>
<dbReference type="STRING" id="398578.Daci_1045"/>
<dbReference type="GeneID" id="94695182"/>
<dbReference type="KEGG" id="dac:Daci_1045"/>
<dbReference type="eggNOG" id="COG0100">
    <property type="taxonomic scope" value="Bacteria"/>
</dbReference>
<dbReference type="HOGENOM" id="CLU_072439_5_0_4"/>
<dbReference type="Proteomes" id="UP000000784">
    <property type="component" value="Chromosome"/>
</dbReference>
<dbReference type="GO" id="GO:1990904">
    <property type="term" value="C:ribonucleoprotein complex"/>
    <property type="evidence" value="ECO:0007669"/>
    <property type="project" value="UniProtKB-KW"/>
</dbReference>
<dbReference type="GO" id="GO:0005840">
    <property type="term" value="C:ribosome"/>
    <property type="evidence" value="ECO:0007669"/>
    <property type="project" value="UniProtKB-KW"/>
</dbReference>
<dbReference type="GO" id="GO:0019843">
    <property type="term" value="F:rRNA binding"/>
    <property type="evidence" value="ECO:0007669"/>
    <property type="project" value="UniProtKB-UniRule"/>
</dbReference>
<dbReference type="GO" id="GO:0003735">
    <property type="term" value="F:structural constituent of ribosome"/>
    <property type="evidence" value="ECO:0007669"/>
    <property type="project" value="InterPro"/>
</dbReference>
<dbReference type="GO" id="GO:0006412">
    <property type="term" value="P:translation"/>
    <property type="evidence" value="ECO:0007669"/>
    <property type="project" value="UniProtKB-UniRule"/>
</dbReference>
<dbReference type="FunFam" id="3.30.420.80:FF:000001">
    <property type="entry name" value="30S ribosomal protein S11"/>
    <property type="match status" value="1"/>
</dbReference>
<dbReference type="Gene3D" id="3.30.420.80">
    <property type="entry name" value="Ribosomal protein S11"/>
    <property type="match status" value="1"/>
</dbReference>
<dbReference type="HAMAP" id="MF_01310">
    <property type="entry name" value="Ribosomal_uS11"/>
    <property type="match status" value="1"/>
</dbReference>
<dbReference type="InterPro" id="IPR001971">
    <property type="entry name" value="Ribosomal_uS11"/>
</dbReference>
<dbReference type="InterPro" id="IPR019981">
    <property type="entry name" value="Ribosomal_uS11_bac-type"/>
</dbReference>
<dbReference type="InterPro" id="IPR018102">
    <property type="entry name" value="Ribosomal_uS11_CS"/>
</dbReference>
<dbReference type="InterPro" id="IPR036967">
    <property type="entry name" value="Ribosomal_uS11_sf"/>
</dbReference>
<dbReference type="NCBIfam" id="NF003698">
    <property type="entry name" value="PRK05309.1"/>
    <property type="match status" value="1"/>
</dbReference>
<dbReference type="NCBIfam" id="TIGR03632">
    <property type="entry name" value="uS11_bact"/>
    <property type="match status" value="1"/>
</dbReference>
<dbReference type="PANTHER" id="PTHR11759">
    <property type="entry name" value="40S RIBOSOMAL PROTEIN S14/30S RIBOSOMAL PROTEIN S11"/>
    <property type="match status" value="1"/>
</dbReference>
<dbReference type="Pfam" id="PF00411">
    <property type="entry name" value="Ribosomal_S11"/>
    <property type="match status" value="1"/>
</dbReference>
<dbReference type="PIRSF" id="PIRSF002131">
    <property type="entry name" value="Ribosomal_S11"/>
    <property type="match status" value="1"/>
</dbReference>
<dbReference type="SUPFAM" id="SSF53137">
    <property type="entry name" value="Translational machinery components"/>
    <property type="match status" value="1"/>
</dbReference>
<dbReference type="PROSITE" id="PS00054">
    <property type="entry name" value="RIBOSOMAL_S11"/>
    <property type="match status" value="1"/>
</dbReference>
<sequence length="134" mass="14175">MAKSPANNAAQRVRKKVRKNISDGIAHVHASFNNTIITITDRQGNALSWASSGGQGFKGSRKSTPFAAQVASEVAGRAAIEQGIKNLDVEIKGPGPGRESSVRALGALGIRITSIADVTPVPHNGCRPQKRRRI</sequence>